<accession>Q8AAP1</accession>
<proteinExistence type="inferred from homology"/>
<gene>
    <name evidence="1" type="primary">infC</name>
    <name type="ordered locus">BT_0423</name>
</gene>
<sequence>MKNDTLKGQYRINEQIRAKEVRIVGDEIEPKVYPIFQALKMAEEKELDLVEISPNAQPPVCRIIDYSKFLYQLKKRQKEQKAKQVKVNVKEIRFGPQTDDHDYNFKLKHARGFLEDGDKVKAYVFFKGRSILFKEQGEVLLLRFANDLEDFAKVDQMPVLEGKRMTIQLSPKKRKCLKNRRLPNR</sequence>
<dbReference type="EMBL" id="AE015928">
    <property type="protein sequence ID" value="AAO75530.1"/>
    <property type="molecule type" value="Genomic_DNA"/>
</dbReference>
<dbReference type="RefSeq" id="NP_809336.1">
    <property type="nucleotide sequence ID" value="NC_004663.1"/>
</dbReference>
<dbReference type="SMR" id="Q8AAP1"/>
<dbReference type="FunCoup" id="Q8AAP1">
    <property type="interactions" value="540"/>
</dbReference>
<dbReference type="STRING" id="226186.BT_0423"/>
<dbReference type="PaxDb" id="226186-BT_0423"/>
<dbReference type="EnsemblBacteria" id="AAO75530">
    <property type="protein sequence ID" value="AAO75530"/>
    <property type="gene ID" value="BT_0423"/>
</dbReference>
<dbReference type="KEGG" id="bth:BT_0423"/>
<dbReference type="PATRIC" id="fig|226186.12.peg.422"/>
<dbReference type="eggNOG" id="COG0290">
    <property type="taxonomic scope" value="Bacteria"/>
</dbReference>
<dbReference type="HOGENOM" id="CLU_054919_3_2_10"/>
<dbReference type="InParanoid" id="Q8AAP1"/>
<dbReference type="OrthoDB" id="9806014at2"/>
<dbReference type="Proteomes" id="UP000001414">
    <property type="component" value="Chromosome"/>
</dbReference>
<dbReference type="GO" id="GO:0005829">
    <property type="term" value="C:cytosol"/>
    <property type="evidence" value="ECO:0000318"/>
    <property type="project" value="GO_Central"/>
</dbReference>
<dbReference type="GO" id="GO:0043022">
    <property type="term" value="F:ribosome binding"/>
    <property type="evidence" value="ECO:0000318"/>
    <property type="project" value="GO_Central"/>
</dbReference>
<dbReference type="GO" id="GO:0003743">
    <property type="term" value="F:translation initiation factor activity"/>
    <property type="evidence" value="ECO:0000318"/>
    <property type="project" value="GO_Central"/>
</dbReference>
<dbReference type="GO" id="GO:0032790">
    <property type="term" value="P:ribosome disassembly"/>
    <property type="evidence" value="ECO:0000318"/>
    <property type="project" value="GO_Central"/>
</dbReference>
<dbReference type="FunFam" id="3.10.20.80:FF:000001">
    <property type="entry name" value="Translation initiation factor IF-3"/>
    <property type="match status" value="1"/>
</dbReference>
<dbReference type="FunFam" id="3.30.110.10:FF:000001">
    <property type="entry name" value="Translation initiation factor IF-3"/>
    <property type="match status" value="1"/>
</dbReference>
<dbReference type="Gene3D" id="3.30.110.10">
    <property type="entry name" value="Translation initiation factor 3 (IF-3), C-terminal domain"/>
    <property type="match status" value="1"/>
</dbReference>
<dbReference type="Gene3D" id="3.10.20.80">
    <property type="entry name" value="Translation initiation factor 3 (IF-3), N-terminal domain"/>
    <property type="match status" value="1"/>
</dbReference>
<dbReference type="HAMAP" id="MF_00080">
    <property type="entry name" value="IF_3"/>
    <property type="match status" value="1"/>
</dbReference>
<dbReference type="InterPro" id="IPR036788">
    <property type="entry name" value="T_IF-3_C_sf"/>
</dbReference>
<dbReference type="InterPro" id="IPR036787">
    <property type="entry name" value="T_IF-3_N_sf"/>
</dbReference>
<dbReference type="InterPro" id="IPR019813">
    <property type="entry name" value="Translation_initiation_fac3_CS"/>
</dbReference>
<dbReference type="InterPro" id="IPR001288">
    <property type="entry name" value="Translation_initiation_fac_3"/>
</dbReference>
<dbReference type="InterPro" id="IPR019815">
    <property type="entry name" value="Translation_initiation_fac_3_C"/>
</dbReference>
<dbReference type="InterPro" id="IPR019814">
    <property type="entry name" value="Translation_initiation_fac_3_N"/>
</dbReference>
<dbReference type="NCBIfam" id="TIGR00168">
    <property type="entry name" value="infC"/>
    <property type="match status" value="1"/>
</dbReference>
<dbReference type="PANTHER" id="PTHR10938">
    <property type="entry name" value="TRANSLATION INITIATION FACTOR IF-3"/>
    <property type="match status" value="1"/>
</dbReference>
<dbReference type="PANTHER" id="PTHR10938:SF0">
    <property type="entry name" value="TRANSLATION INITIATION FACTOR IF-3, MITOCHONDRIAL"/>
    <property type="match status" value="1"/>
</dbReference>
<dbReference type="Pfam" id="PF00707">
    <property type="entry name" value="IF3_C"/>
    <property type="match status" value="1"/>
</dbReference>
<dbReference type="Pfam" id="PF05198">
    <property type="entry name" value="IF3_N"/>
    <property type="match status" value="1"/>
</dbReference>
<dbReference type="SUPFAM" id="SSF55200">
    <property type="entry name" value="Translation initiation factor IF3, C-terminal domain"/>
    <property type="match status" value="1"/>
</dbReference>
<dbReference type="SUPFAM" id="SSF54364">
    <property type="entry name" value="Translation initiation factor IF3, N-terminal domain"/>
    <property type="match status" value="1"/>
</dbReference>
<dbReference type="PROSITE" id="PS00938">
    <property type="entry name" value="IF3"/>
    <property type="match status" value="1"/>
</dbReference>
<protein>
    <recommendedName>
        <fullName evidence="1">Translation initiation factor IF-3</fullName>
    </recommendedName>
</protein>
<reference key="1">
    <citation type="journal article" date="2003" name="Science">
        <title>A genomic view of the human-Bacteroides thetaiotaomicron symbiosis.</title>
        <authorList>
            <person name="Xu J."/>
            <person name="Bjursell M.K."/>
            <person name="Himrod J."/>
            <person name="Deng S."/>
            <person name="Carmichael L.K."/>
            <person name="Chiang H.C."/>
            <person name="Hooper L.V."/>
            <person name="Gordon J.I."/>
        </authorList>
    </citation>
    <scope>NUCLEOTIDE SEQUENCE [LARGE SCALE GENOMIC DNA]</scope>
    <source>
        <strain>ATCC 29148 / DSM 2079 / JCM 5827 / CCUG 10774 / NCTC 10582 / VPI-5482 / E50</strain>
    </source>
</reference>
<feature type="chain" id="PRO_0000177483" description="Translation initiation factor IF-3">
    <location>
        <begin position="1"/>
        <end position="185"/>
    </location>
</feature>
<keyword id="KW-0963">Cytoplasm</keyword>
<keyword id="KW-0396">Initiation factor</keyword>
<keyword id="KW-0648">Protein biosynthesis</keyword>
<keyword id="KW-1185">Reference proteome</keyword>
<comment type="function">
    <text evidence="1">IF-3 binds to the 30S ribosomal subunit and shifts the equilibrium between 70S ribosomes and their 50S and 30S subunits in favor of the free subunits, thus enhancing the availability of 30S subunits on which protein synthesis initiation begins.</text>
</comment>
<comment type="subunit">
    <text evidence="1">Monomer.</text>
</comment>
<comment type="subcellular location">
    <subcellularLocation>
        <location evidence="1">Cytoplasm</location>
    </subcellularLocation>
</comment>
<comment type="similarity">
    <text evidence="1">Belongs to the IF-3 family.</text>
</comment>
<name>IF3_BACTN</name>
<organism>
    <name type="scientific">Bacteroides thetaiotaomicron (strain ATCC 29148 / DSM 2079 / JCM 5827 / CCUG 10774 / NCTC 10582 / VPI-5482 / E50)</name>
    <dbReference type="NCBI Taxonomy" id="226186"/>
    <lineage>
        <taxon>Bacteria</taxon>
        <taxon>Pseudomonadati</taxon>
        <taxon>Bacteroidota</taxon>
        <taxon>Bacteroidia</taxon>
        <taxon>Bacteroidales</taxon>
        <taxon>Bacteroidaceae</taxon>
        <taxon>Bacteroides</taxon>
    </lineage>
</organism>
<evidence type="ECO:0000255" key="1">
    <source>
        <dbReference type="HAMAP-Rule" id="MF_00080"/>
    </source>
</evidence>